<proteinExistence type="inferred from homology"/>
<evidence type="ECO:0000255" key="1">
    <source>
        <dbReference type="HAMAP-Rule" id="MF_00087"/>
    </source>
</evidence>
<feature type="chain" id="PRO_1000093108" description="Glutamyl-tRNA reductase">
    <location>
        <begin position="1"/>
        <end position="427"/>
    </location>
</feature>
<feature type="active site" description="Nucleophile" evidence="1">
    <location>
        <position position="50"/>
    </location>
</feature>
<feature type="binding site" evidence="1">
    <location>
        <begin position="49"/>
        <end position="52"/>
    </location>
    <ligand>
        <name>substrate</name>
    </ligand>
</feature>
<feature type="binding site" evidence="1">
    <location>
        <position position="105"/>
    </location>
    <ligand>
        <name>substrate</name>
    </ligand>
</feature>
<feature type="binding site" evidence="1">
    <location>
        <begin position="110"/>
        <end position="112"/>
    </location>
    <ligand>
        <name>substrate</name>
    </ligand>
</feature>
<feature type="binding site" evidence="1">
    <location>
        <position position="116"/>
    </location>
    <ligand>
        <name>substrate</name>
    </ligand>
</feature>
<feature type="binding site" evidence="1">
    <location>
        <begin position="185"/>
        <end position="190"/>
    </location>
    <ligand>
        <name>NADP(+)</name>
        <dbReference type="ChEBI" id="CHEBI:58349"/>
    </ligand>
</feature>
<feature type="site" description="Important for activity" evidence="1">
    <location>
        <position position="95"/>
    </location>
</feature>
<comment type="function">
    <text evidence="1">Catalyzes the NADPH-dependent reduction of glutamyl-tRNA(Glu) to glutamate 1-semialdehyde (GSA).</text>
</comment>
<comment type="catalytic activity">
    <reaction evidence="1">
        <text>(S)-4-amino-5-oxopentanoate + tRNA(Glu) + NADP(+) = L-glutamyl-tRNA(Glu) + NADPH + H(+)</text>
        <dbReference type="Rhea" id="RHEA:12344"/>
        <dbReference type="Rhea" id="RHEA-COMP:9663"/>
        <dbReference type="Rhea" id="RHEA-COMP:9680"/>
        <dbReference type="ChEBI" id="CHEBI:15378"/>
        <dbReference type="ChEBI" id="CHEBI:57501"/>
        <dbReference type="ChEBI" id="CHEBI:57783"/>
        <dbReference type="ChEBI" id="CHEBI:58349"/>
        <dbReference type="ChEBI" id="CHEBI:78442"/>
        <dbReference type="ChEBI" id="CHEBI:78520"/>
        <dbReference type="EC" id="1.2.1.70"/>
    </reaction>
</comment>
<comment type="pathway">
    <text evidence="1">Porphyrin-containing compound metabolism; protoporphyrin-IX biosynthesis; 5-aminolevulinate from L-glutamyl-tRNA(Glu): step 1/2.</text>
</comment>
<comment type="subunit">
    <text evidence="1">Homodimer.</text>
</comment>
<comment type="domain">
    <text evidence="1">Possesses an unusual extended V-shaped dimeric structure with each monomer consisting of three distinct domains arranged along a curved 'spinal' alpha-helix. The N-terminal catalytic domain specifically recognizes the glutamate moiety of the substrate. The second domain is the NADPH-binding domain, and the third C-terminal domain is responsible for dimerization.</text>
</comment>
<comment type="miscellaneous">
    <text evidence="1">During catalysis, the active site Cys acts as a nucleophile attacking the alpha-carbonyl group of tRNA-bound glutamate with the formation of a thioester intermediate between enzyme and glutamate, and the concomitant release of tRNA(Glu). The thioester intermediate is finally reduced by direct hydride transfer from NADPH, to form the product GSA.</text>
</comment>
<comment type="similarity">
    <text evidence="1">Belongs to the glutamyl-tRNA reductase family.</text>
</comment>
<organism>
    <name type="scientific">Acinetobacter baumannii (strain SDF)</name>
    <dbReference type="NCBI Taxonomy" id="509170"/>
    <lineage>
        <taxon>Bacteria</taxon>
        <taxon>Pseudomonadati</taxon>
        <taxon>Pseudomonadota</taxon>
        <taxon>Gammaproteobacteria</taxon>
        <taxon>Moraxellales</taxon>
        <taxon>Moraxellaceae</taxon>
        <taxon>Acinetobacter</taxon>
        <taxon>Acinetobacter calcoaceticus/baumannii complex</taxon>
    </lineage>
</organism>
<dbReference type="EC" id="1.2.1.70" evidence="1"/>
<dbReference type="EMBL" id="CU468230">
    <property type="protein sequence ID" value="CAP01930.1"/>
    <property type="molecule type" value="Genomic_DNA"/>
</dbReference>
<dbReference type="SMR" id="B0VTW7"/>
<dbReference type="KEGG" id="abm:ABSDF2623"/>
<dbReference type="HOGENOM" id="CLU_035113_2_2_6"/>
<dbReference type="UniPathway" id="UPA00251">
    <property type="reaction ID" value="UER00316"/>
</dbReference>
<dbReference type="Proteomes" id="UP000001741">
    <property type="component" value="Chromosome"/>
</dbReference>
<dbReference type="GO" id="GO:0008883">
    <property type="term" value="F:glutamyl-tRNA reductase activity"/>
    <property type="evidence" value="ECO:0007669"/>
    <property type="project" value="UniProtKB-UniRule"/>
</dbReference>
<dbReference type="GO" id="GO:0050661">
    <property type="term" value="F:NADP binding"/>
    <property type="evidence" value="ECO:0007669"/>
    <property type="project" value="InterPro"/>
</dbReference>
<dbReference type="GO" id="GO:0019353">
    <property type="term" value="P:protoporphyrinogen IX biosynthetic process from glutamate"/>
    <property type="evidence" value="ECO:0007669"/>
    <property type="project" value="TreeGrafter"/>
</dbReference>
<dbReference type="CDD" id="cd05213">
    <property type="entry name" value="NAD_bind_Glutamyl_tRNA_reduct"/>
    <property type="match status" value="1"/>
</dbReference>
<dbReference type="FunFam" id="3.30.460.30:FF:000001">
    <property type="entry name" value="Glutamyl-tRNA reductase"/>
    <property type="match status" value="1"/>
</dbReference>
<dbReference type="FunFam" id="3.40.50.720:FF:000031">
    <property type="entry name" value="Glutamyl-tRNA reductase"/>
    <property type="match status" value="1"/>
</dbReference>
<dbReference type="Gene3D" id="3.30.460.30">
    <property type="entry name" value="Glutamyl-tRNA reductase, N-terminal domain"/>
    <property type="match status" value="1"/>
</dbReference>
<dbReference type="Gene3D" id="3.40.50.720">
    <property type="entry name" value="NAD(P)-binding Rossmann-like Domain"/>
    <property type="match status" value="1"/>
</dbReference>
<dbReference type="HAMAP" id="MF_00087">
    <property type="entry name" value="Glu_tRNA_reductase"/>
    <property type="match status" value="1"/>
</dbReference>
<dbReference type="InterPro" id="IPR000343">
    <property type="entry name" value="4pyrrol_synth_GluRdtase"/>
</dbReference>
<dbReference type="InterPro" id="IPR015896">
    <property type="entry name" value="4pyrrol_synth_GluRdtase_dimer"/>
</dbReference>
<dbReference type="InterPro" id="IPR015895">
    <property type="entry name" value="4pyrrol_synth_GluRdtase_N"/>
</dbReference>
<dbReference type="InterPro" id="IPR018214">
    <property type="entry name" value="GluRdtase_CS"/>
</dbReference>
<dbReference type="InterPro" id="IPR036453">
    <property type="entry name" value="GluRdtase_dimer_dom_sf"/>
</dbReference>
<dbReference type="InterPro" id="IPR036343">
    <property type="entry name" value="GluRdtase_N_sf"/>
</dbReference>
<dbReference type="InterPro" id="IPR036291">
    <property type="entry name" value="NAD(P)-bd_dom_sf"/>
</dbReference>
<dbReference type="InterPro" id="IPR006151">
    <property type="entry name" value="Shikm_DH/Glu-tRNA_Rdtase"/>
</dbReference>
<dbReference type="NCBIfam" id="TIGR01035">
    <property type="entry name" value="hemA"/>
    <property type="match status" value="1"/>
</dbReference>
<dbReference type="PANTHER" id="PTHR43013">
    <property type="entry name" value="GLUTAMYL-TRNA REDUCTASE"/>
    <property type="match status" value="1"/>
</dbReference>
<dbReference type="PANTHER" id="PTHR43013:SF1">
    <property type="entry name" value="GLUTAMYL-TRNA REDUCTASE"/>
    <property type="match status" value="1"/>
</dbReference>
<dbReference type="Pfam" id="PF00745">
    <property type="entry name" value="GlutR_dimer"/>
    <property type="match status" value="1"/>
</dbReference>
<dbReference type="Pfam" id="PF05201">
    <property type="entry name" value="GlutR_N"/>
    <property type="match status" value="1"/>
</dbReference>
<dbReference type="Pfam" id="PF01488">
    <property type="entry name" value="Shikimate_DH"/>
    <property type="match status" value="1"/>
</dbReference>
<dbReference type="PIRSF" id="PIRSF000445">
    <property type="entry name" value="4pyrrol_synth_GluRdtase"/>
    <property type="match status" value="1"/>
</dbReference>
<dbReference type="SUPFAM" id="SSF69742">
    <property type="entry name" value="Glutamyl tRNA-reductase catalytic, N-terminal domain"/>
    <property type="match status" value="1"/>
</dbReference>
<dbReference type="SUPFAM" id="SSF69075">
    <property type="entry name" value="Glutamyl tRNA-reductase dimerization domain"/>
    <property type="match status" value="1"/>
</dbReference>
<dbReference type="SUPFAM" id="SSF51735">
    <property type="entry name" value="NAD(P)-binding Rossmann-fold domains"/>
    <property type="match status" value="1"/>
</dbReference>
<dbReference type="PROSITE" id="PS00747">
    <property type="entry name" value="GLUTR"/>
    <property type="match status" value="1"/>
</dbReference>
<reference key="1">
    <citation type="journal article" date="2008" name="PLoS ONE">
        <title>Comparative analysis of Acinetobacters: three genomes for three lifestyles.</title>
        <authorList>
            <person name="Vallenet D."/>
            <person name="Nordmann P."/>
            <person name="Barbe V."/>
            <person name="Poirel L."/>
            <person name="Mangenot S."/>
            <person name="Bataille E."/>
            <person name="Dossat C."/>
            <person name="Gas S."/>
            <person name="Kreimeyer A."/>
            <person name="Lenoble P."/>
            <person name="Oztas S."/>
            <person name="Poulain J."/>
            <person name="Segurens B."/>
            <person name="Robert C."/>
            <person name="Abergel C."/>
            <person name="Claverie J.-M."/>
            <person name="Raoult D."/>
            <person name="Medigue C."/>
            <person name="Weissenbach J."/>
            <person name="Cruveiller S."/>
        </authorList>
    </citation>
    <scope>NUCLEOTIDE SEQUENCE [LARGE SCALE GENOMIC DNA]</scope>
    <source>
        <strain>SDF</strain>
    </source>
</reference>
<protein>
    <recommendedName>
        <fullName evidence="1">Glutamyl-tRNA reductase</fullName>
        <shortName evidence="1">GluTR</shortName>
        <ecNumber evidence="1">1.2.1.70</ecNumber>
    </recommendedName>
</protein>
<keyword id="KW-0521">NADP</keyword>
<keyword id="KW-0560">Oxidoreductase</keyword>
<keyword id="KW-0627">Porphyrin biosynthesis</keyword>
<sequence length="427" mass="47964">MSFFALGVNHQTASVELREQIAFNAERLSNLLAEQRHHESLKDLVVVSTCNRTEVYAMAEDAESLLKWLADANNIDVKQLIHHVYRYENAQAITHLMRVASGLDSLMLGEPQILGQVKSALALSKEAQTVSPELNSVFEYAFYAAKRVRSETAVGSHAVSMGYAVAQLALQVFSKPEKLTVMVVAAGEMNSLVAKHLAEMGVAKMIICNRSRERADQLAQEIAHQVEVEIIDFSDLAENLYRADVVSSCTGSLHQVIAYADVKTALKKRRYQQMLMVDLAVPRDIDPKVESLDGVYLYGVDDLQSVIDENLAQRRQAAVEAEVMVNQLATQLITHQKVKEAGSTIHAYRQHSEEISQRELTHALEALHHGGNPEQVLQQFAHRLTQKLIHPTSMLLREAAKAESPDYFEWLQQHLQDVFDHERKPKR</sequence>
<gene>
    <name evidence="1" type="primary">hemA</name>
    <name type="ordered locus">ABSDF2623</name>
</gene>
<accession>B0VTW7</accession>
<name>HEM1_ACIBS</name>